<accession>P62310</accession>
<accession>Q6IAH0</accession>
<accession>Q9Y4Z1</accession>
<organism>
    <name type="scientific">Homo sapiens</name>
    <name type="common">Human</name>
    <dbReference type="NCBI Taxonomy" id="9606"/>
    <lineage>
        <taxon>Eukaryota</taxon>
        <taxon>Metazoa</taxon>
        <taxon>Chordata</taxon>
        <taxon>Craniata</taxon>
        <taxon>Vertebrata</taxon>
        <taxon>Euteleostomi</taxon>
        <taxon>Mammalia</taxon>
        <taxon>Eutheria</taxon>
        <taxon>Euarchontoglires</taxon>
        <taxon>Primates</taxon>
        <taxon>Haplorrhini</taxon>
        <taxon>Catarrhini</taxon>
        <taxon>Hominidae</taxon>
        <taxon>Homo</taxon>
    </lineage>
</organism>
<sequence length="102" mass="11845">MADDVDQQQTTNTVEEPLDLIRLSLDERIYVKMRNDRELRGRLHAYDQHLNMILGDVEETVTTIEIDEETYEEIYKSTKRNIPMLFVRGDGVVLVAPPLRVG</sequence>
<feature type="initiator methionine" description="Removed" evidence="9 10">
    <location>
        <position position="1"/>
    </location>
</feature>
<feature type="chain" id="PRO_0000125560" description="U6 snRNA-associated Sm-like protein LSm3">
    <location>
        <begin position="2"/>
        <end position="102"/>
    </location>
</feature>
<feature type="domain" description="Sm" evidence="1">
    <location>
        <begin position="16"/>
        <end position="101"/>
    </location>
</feature>
<feature type="modified residue" description="N-acetylalanine" evidence="9 10">
    <location>
        <position position="2"/>
    </location>
</feature>
<gene>
    <name type="primary">LSM3</name>
    <name type="ORF">MDS017</name>
</gene>
<comment type="function">
    <text evidence="2 5">Plays a role in pre-mRNA splicing as component of the U4/U6-U5 tri-snRNP complex that is involved in spliceosome assembly, and as component of the precatalytic spliceosome (spliceosome B complex) (PubMed:28781166). The heptameric LSM2-8 complex binds specifically to the 3'-terminal U-tract of U6 snRNA (PubMed:10523320).</text>
</comment>
<comment type="subunit">
    <text evidence="2 3 4 5">Component of the precatalytic spliceosome (spliceosome B complex) (PubMed:11991638, PubMed:28781166). Component of the U4/U6-U5 tri-snRNP complex, a building block of the precatalytic spliceosome (spliceosome B complex) (PubMed:10523320, PubMed:26912367, PubMed:28781166). The U4/U6-U5 tri-snRNP complex is composed of the U4, U6 and U5 snRNAs and at least PRPF3, PRPF4, PRPF6, PRPF8, PRPF31, SNRNP200, TXNL4A, SNRNP40, SNRPB, SNRPD1, SNRPD2, SNRPD3, SNRPE, SNRPF, SNRPG, DDX23, CD2BP2, PPIH, SNU13, EFTUD2, SART1 and USP39, plus LSM2, LSM3, LSM4, LSM5, LSM6, LSM7 and LSM8 (PubMed:26912367). LSM2, LSM3, LSM4, LSM5, LSM6, LSM7 and LSM8 form a heptameric, ring-shaped subcomplex (the LSM2-8 complex) that is part of the U4/U6-U5 tri-snRNP complex and the precatalytic spliceosome (PubMed:10523320, PubMed:26912367, PubMed:28781166).</text>
</comment>
<comment type="interaction">
    <interactant intactId="EBI-348239">
        <id>P62310</id>
    </interactant>
    <interactant intactId="EBI-372775">
        <id>Q96GE4</id>
        <label>CEP95</label>
    </interactant>
    <organismsDiffer>false</organismsDiffer>
    <experiments>3</experiments>
</comment>
<comment type="interaction">
    <interactant intactId="EBI-348239">
        <id>P62310</id>
    </interactant>
    <interactant intactId="EBI-724693">
        <id>P54105</id>
        <label>CLNS1A</label>
    </interactant>
    <organismsDiffer>false</organismsDiffer>
    <experiments>9</experiments>
</comment>
<comment type="interaction">
    <interactant intactId="EBI-348239">
        <id>P62310</id>
    </interactant>
    <interactant intactId="EBI-742054">
        <id>Q96D03</id>
        <label>DDIT4L</label>
    </interactant>
    <organismsDiffer>false</organismsDiffer>
    <experiments>3</experiments>
</comment>
<comment type="interaction">
    <interactant intactId="EBI-348239">
        <id>P62310</id>
    </interactant>
    <interactant intactId="EBI-6509505">
        <id>Q0VD86</id>
        <label>INCA1</label>
    </interactant>
    <organismsDiffer>false</organismsDiffer>
    <experiments>3</experiments>
</comment>
<comment type="interaction">
    <interactant intactId="EBI-348239">
        <id>P62310</id>
    </interactant>
    <interactant intactId="EBI-751001">
        <id>Q14145</id>
        <label>KEAP1</label>
    </interactant>
    <organismsDiffer>false</organismsDiffer>
    <experiments>6</experiments>
</comment>
<comment type="interaction">
    <interactant intactId="EBI-348239">
        <id>P62310</id>
    </interactant>
    <interactant intactId="EBI-347619">
        <id>O15116</id>
        <label>LSM1</label>
    </interactant>
    <organismsDiffer>false</organismsDiffer>
    <experiments>18</experiments>
</comment>
<comment type="interaction">
    <interactant intactId="EBI-348239">
        <id>P62310</id>
    </interactant>
    <interactant intactId="EBI-373268">
        <id>Q969L4</id>
        <label>LSM10</label>
    </interactant>
    <organismsDiffer>false</organismsDiffer>
    <experiments>6</experiments>
</comment>
<comment type="interaction">
    <interactant intactId="EBI-348239">
        <id>P62310</id>
    </interactant>
    <interactant intactId="EBI-725133">
        <id>Q3MHD2</id>
        <label>LSM12</label>
    </interactant>
    <organismsDiffer>false</organismsDiffer>
    <experiments>3</experiments>
</comment>
<comment type="interaction">
    <interactant intactId="EBI-348239">
        <id>P62310</id>
    </interactant>
    <interactant intactId="EBI-347416">
        <id>Q9Y333</id>
        <label>LSM2</label>
    </interactant>
    <organismsDiffer>false</organismsDiffer>
    <experiments>73</experiments>
</comment>
<comment type="interaction">
    <interactant intactId="EBI-348239">
        <id>P62310</id>
    </interactant>
    <interactant intactId="EBI-373007">
        <id>Q9Y4Y9</id>
        <label>LSM5</label>
    </interactant>
    <organismsDiffer>false</organismsDiffer>
    <experiments>8</experiments>
</comment>
<comment type="interaction">
    <interactant intactId="EBI-348239">
        <id>P62310</id>
    </interactant>
    <interactant intactId="EBI-373310">
        <id>P62312</id>
        <label>LSM6</label>
    </interactant>
    <organismsDiffer>false</organismsDiffer>
    <experiments>17</experiments>
</comment>
<comment type="interaction">
    <interactant intactId="EBI-348239">
        <id>P62310</id>
    </interactant>
    <interactant intactId="EBI-348372">
        <id>Q9UK45</id>
        <label>LSM7</label>
    </interactant>
    <organismsDiffer>false</organismsDiffer>
    <experiments>11</experiments>
</comment>
<comment type="interaction">
    <interactant intactId="EBI-348239">
        <id>P62310</id>
    </interactant>
    <interactant intactId="EBI-347779">
        <id>O95777</id>
        <label>LSM8</label>
    </interactant>
    <organismsDiffer>false</organismsDiffer>
    <experiments>8</experiments>
</comment>
<comment type="interaction">
    <interactant intactId="EBI-348239">
        <id>P62310</id>
    </interactant>
    <interactant intactId="EBI-7950997">
        <id>Q96RE7</id>
        <label>NACC1</label>
    </interactant>
    <organismsDiffer>false</organismsDiffer>
    <experiments>3</experiments>
</comment>
<comment type="interaction">
    <interactant intactId="EBI-348239">
        <id>P62310</id>
    </interactant>
    <interactant intactId="EBI-372789">
        <id>P62318</id>
        <label>SNRPD3</label>
    </interactant>
    <organismsDiffer>false</organismsDiffer>
    <experiments>5</experiments>
</comment>
<comment type="interaction">
    <interactant intactId="EBI-348239">
        <id>P62310</id>
    </interactant>
    <interactant intactId="EBI-356900">
        <id>P62306</id>
        <label>SNRPF</label>
    </interactant>
    <organismsDiffer>false</organismsDiffer>
    <experiments>4</experiments>
</comment>
<comment type="interaction">
    <interactant intactId="EBI-348239">
        <id>P62310</id>
    </interactant>
    <interactant intactId="EBI-749995">
        <id>P56279</id>
        <label>TCL1A</label>
    </interactant>
    <organismsDiffer>false</organismsDiffer>
    <experiments>6</experiments>
</comment>
<comment type="interaction">
    <interactant intactId="EBI-348239">
        <id>P62310</id>
    </interactant>
    <interactant intactId="EBI-11139477">
        <id>Q96N21</id>
        <label>TEPSIN</label>
    </interactant>
    <organismsDiffer>false</organismsDiffer>
    <experiments>3</experiments>
</comment>
<comment type="interaction">
    <interactant intactId="EBI-348239">
        <id>P62310</id>
    </interactant>
    <interactant intactId="EBI-1105213">
        <id>Q9UBB9</id>
        <label>TFIP11</label>
    </interactant>
    <organismsDiffer>false</organismsDiffer>
    <experiments>3</experiments>
</comment>
<comment type="interaction">
    <interactant intactId="EBI-348239">
        <id>P62310</id>
    </interactant>
    <interactant intactId="EBI-11961968">
        <id>P0DI81-3</id>
        <label>TRAPPC2</label>
    </interactant>
    <organismsDiffer>false</organismsDiffer>
    <experiments>3</experiments>
</comment>
<comment type="interaction">
    <interactant intactId="EBI-348239">
        <id>P62310</id>
    </interactant>
    <interactant intactId="EBI-354065">
        <id>P67809</id>
        <label>YBX1</label>
    </interactant>
    <organismsDiffer>false</organismsDiffer>
    <experiments>2</experiments>
</comment>
<comment type="subcellular location">
    <subcellularLocation>
        <location evidence="2 3 4 5">Nucleus</location>
    </subcellularLocation>
</comment>
<comment type="similarity">
    <text evidence="6">Belongs to the snRNP Sm proteins family.</text>
</comment>
<keyword id="KW-0002">3D-structure</keyword>
<keyword id="KW-0007">Acetylation</keyword>
<keyword id="KW-0903">Direct protein sequencing</keyword>
<keyword id="KW-0507">mRNA processing</keyword>
<keyword id="KW-0508">mRNA splicing</keyword>
<keyword id="KW-0539">Nucleus</keyword>
<keyword id="KW-1267">Proteomics identification</keyword>
<keyword id="KW-1185">Reference proteome</keyword>
<keyword id="KW-0687">Ribonucleoprotein</keyword>
<keyword id="KW-0694">RNA-binding</keyword>
<keyword id="KW-0747">Spliceosome</keyword>
<reference key="1">
    <citation type="journal article" date="1999" name="EMBO J.">
        <title>Sm and Sm-like proteins assemble in two related complexes of deep evolutionary origin.</title>
        <authorList>
            <person name="Salgado-Garrido J."/>
            <person name="Bragado-Nilsson E."/>
            <person name="Kandels-Lewis S."/>
            <person name="Seraphin B."/>
        </authorList>
    </citation>
    <scope>NUCLEOTIDE SEQUENCE [MRNA]</scope>
    <source>
        <tissue>Fetal liver</tissue>
        <tissue>Spleen</tissue>
    </source>
</reference>
<reference key="2">
    <citation type="journal article" date="1999" name="EMBO J.">
        <title>A doughnut-shaped heteromer of human Sm-like proteins binds to the 3'-end of U6 snRNA, thereby facilitating U4/U6 duplex formation in vitro.</title>
        <authorList>
            <person name="Achsel T."/>
            <person name="Brahms H."/>
            <person name="Kastner B."/>
            <person name="Bachi A."/>
            <person name="Wilm M."/>
            <person name="Luehrmann R."/>
        </authorList>
    </citation>
    <scope>NUCLEOTIDE SEQUENCE [MRNA]</scope>
    <scope>PARTIAL PROTEIN SEQUENCE</scope>
    <scope>SUBUNIT</scope>
    <scope>FUNCTION</scope>
    <scope>SUBCELLULAR LOCATION</scope>
</reference>
<reference key="3">
    <citation type="submission" date="1999-09" db="EMBL/GenBank/DDBJ databases">
        <title>Novel genes expressed in hematopoietic stem/progenitor cells from myelodysplastic syndrome patients.</title>
        <authorList>
            <person name="Huang C."/>
            <person name="Qian B."/>
            <person name="Tu Y."/>
            <person name="Gu W."/>
            <person name="Wang Y."/>
            <person name="Han Z."/>
            <person name="Chen Z."/>
        </authorList>
    </citation>
    <scope>NUCLEOTIDE SEQUENCE [LARGE SCALE MRNA]</scope>
    <source>
        <tissue>Hematopoietic stem cell</tissue>
    </source>
</reference>
<reference key="4">
    <citation type="submission" date="2004-06" db="EMBL/GenBank/DDBJ databases">
        <title>Cloning of human full open reading frames in Gateway(TM) system entry vector (pDONR201).</title>
        <authorList>
            <person name="Ebert L."/>
            <person name="Schick M."/>
            <person name="Neubert P."/>
            <person name="Schatten R."/>
            <person name="Henze S."/>
            <person name="Korn B."/>
        </authorList>
    </citation>
    <scope>NUCLEOTIDE SEQUENCE [LARGE SCALE MRNA]</scope>
</reference>
<reference key="5">
    <citation type="submission" date="2005-07" db="EMBL/GenBank/DDBJ databases">
        <authorList>
            <person name="Mural R.J."/>
            <person name="Istrail S."/>
            <person name="Sutton G.G."/>
            <person name="Florea L."/>
            <person name="Halpern A.L."/>
            <person name="Mobarry C.M."/>
            <person name="Lippert R."/>
            <person name="Walenz B."/>
            <person name="Shatkay H."/>
            <person name="Dew I."/>
            <person name="Miller J.R."/>
            <person name="Flanigan M.J."/>
            <person name="Edwards N.J."/>
            <person name="Bolanos R."/>
            <person name="Fasulo D."/>
            <person name="Halldorsson B.V."/>
            <person name="Hannenhalli S."/>
            <person name="Turner R."/>
            <person name="Yooseph S."/>
            <person name="Lu F."/>
            <person name="Nusskern D.R."/>
            <person name="Shue B.C."/>
            <person name="Zheng X.H."/>
            <person name="Zhong F."/>
            <person name="Delcher A.L."/>
            <person name="Huson D.H."/>
            <person name="Kravitz S.A."/>
            <person name="Mouchard L."/>
            <person name="Reinert K."/>
            <person name="Remington K.A."/>
            <person name="Clark A.G."/>
            <person name="Waterman M.S."/>
            <person name="Eichler E.E."/>
            <person name="Adams M.D."/>
            <person name="Hunkapiller M.W."/>
            <person name="Myers E.W."/>
            <person name="Venter J.C."/>
        </authorList>
    </citation>
    <scope>NUCLEOTIDE SEQUENCE [LARGE SCALE GENOMIC DNA]</scope>
</reference>
<reference key="6">
    <citation type="journal article" date="2004" name="Genome Res.">
        <title>The status, quality, and expansion of the NIH full-length cDNA project: the Mammalian Gene Collection (MGC).</title>
        <authorList>
            <consortium name="The MGC Project Team"/>
        </authorList>
    </citation>
    <scope>NUCLEOTIDE SEQUENCE [LARGE SCALE MRNA]</scope>
    <source>
        <tissue>Kidney</tissue>
    </source>
</reference>
<reference key="7">
    <citation type="journal article" date="2002" name="RNA">
        <title>Purification and characterization of native spliceosomes suitable for three-dimensional structural analysis.</title>
        <authorList>
            <person name="Jurica M.S."/>
            <person name="Licklider L.J."/>
            <person name="Gygi S.P."/>
            <person name="Grigorieff N."/>
            <person name="Moore M.J."/>
        </authorList>
    </citation>
    <scope>IDENTIFICATION BY MASS SPECTROMETRY</scope>
    <scope>IDENTIFICATION IN THE SPLICEOSOMAL COMPLEX</scope>
</reference>
<reference key="8">
    <citation type="journal article" date="2009" name="Anal. Chem.">
        <title>Lys-N and trypsin cover complementary parts of the phosphoproteome in a refined SCX-based approach.</title>
        <authorList>
            <person name="Gauci S."/>
            <person name="Helbig A.O."/>
            <person name="Slijper M."/>
            <person name="Krijgsveld J."/>
            <person name="Heck A.J."/>
            <person name="Mohammed S."/>
        </authorList>
    </citation>
    <scope>ACETYLATION [LARGE SCALE ANALYSIS] AT ALA-2</scope>
    <scope>CLEAVAGE OF INITIATOR METHIONINE [LARGE SCALE ANALYSIS]</scope>
    <scope>IDENTIFICATION BY MASS SPECTROMETRY [LARGE SCALE ANALYSIS]</scope>
</reference>
<reference key="9">
    <citation type="journal article" date="2011" name="BMC Syst. Biol.">
        <title>Initial characterization of the human central proteome.</title>
        <authorList>
            <person name="Burkard T.R."/>
            <person name="Planyavsky M."/>
            <person name="Kaupe I."/>
            <person name="Breitwieser F.P."/>
            <person name="Buerckstuemmer T."/>
            <person name="Bennett K.L."/>
            <person name="Superti-Furga G."/>
            <person name="Colinge J."/>
        </authorList>
    </citation>
    <scope>IDENTIFICATION BY MASS SPECTROMETRY [LARGE SCALE ANALYSIS]</scope>
</reference>
<reference key="10">
    <citation type="journal article" date="2012" name="Proc. Natl. Acad. Sci. U.S.A.">
        <title>N-terminal acetylome analyses and functional insights of the N-terminal acetyltransferase NatB.</title>
        <authorList>
            <person name="Van Damme P."/>
            <person name="Lasa M."/>
            <person name="Polevoda B."/>
            <person name="Gazquez C."/>
            <person name="Elosegui-Artola A."/>
            <person name="Kim D.S."/>
            <person name="De Juan-Pardo E."/>
            <person name="Demeyer K."/>
            <person name="Hole K."/>
            <person name="Larrea E."/>
            <person name="Timmerman E."/>
            <person name="Prieto J."/>
            <person name="Arnesen T."/>
            <person name="Sherman F."/>
            <person name="Gevaert K."/>
            <person name="Aldabe R."/>
        </authorList>
    </citation>
    <scope>ACETYLATION [LARGE SCALE ANALYSIS] AT ALA-2</scope>
    <scope>CLEAVAGE OF INITIATOR METHIONINE [LARGE SCALE ANALYSIS]</scope>
    <scope>IDENTIFICATION BY MASS SPECTROMETRY [LARGE SCALE ANALYSIS]</scope>
</reference>
<reference key="11">
    <citation type="journal article" date="2015" name="Proteomics">
        <title>N-terminome analysis of the human mitochondrial proteome.</title>
        <authorList>
            <person name="Vaca Jacome A.S."/>
            <person name="Rabilloud T."/>
            <person name="Schaeffer-Reiss C."/>
            <person name="Rompais M."/>
            <person name="Ayoub D."/>
            <person name="Lane L."/>
            <person name="Bairoch A."/>
            <person name="Van Dorsselaer A."/>
            <person name="Carapito C."/>
        </authorList>
    </citation>
    <scope>IDENTIFICATION BY MASS SPECTROMETRY [LARGE SCALE ANALYSIS]</scope>
</reference>
<reference evidence="7" key="12">
    <citation type="journal article" date="2016" name="Science">
        <title>Molecular architecture of the human U4/U6.U5 tri-snRNP.</title>
        <authorList>
            <person name="Agafonov D.E."/>
            <person name="Kastner B."/>
            <person name="Dybkov O."/>
            <person name="Hofele R.V."/>
            <person name="Liu W.T."/>
            <person name="Urlaub H."/>
            <person name="Luhrmann R."/>
            <person name="Stark H."/>
        </authorList>
    </citation>
    <scope>STRUCTURE BY ELECTRON MICROSCOPY (7.00 ANGSTROMS)</scope>
    <scope>SUBCELLULAR LOCATION</scope>
    <scope>SUBUNIT</scope>
    <scope>IDENTIFICATION BY MASS SPECTROMETRY</scope>
</reference>
<reference evidence="8" key="13">
    <citation type="journal article" date="2017" name="Cell">
        <title>Cryo-EM Structure of a Pre-catalytic Human Spliceosome Primed for Activation.</title>
        <authorList>
            <person name="Bertram K."/>
            <person name="Agafonov D.E."/>
            <person name="Dybkov O."/>
            <person name="Haselbach D."/>
            <person name="Leelaram M.N."/>
            <person name="Will C.L."/>
            <person name="Urlaub H."/>
            <person name="Kastner B."/>
            <person name="Luhrmann R."/>
            <person name="Stark H."/>
        </authorList>
    </citation>
    <scope>STRUCTURE BY ELECTRON MICROSCOPY (4.50 ANGSTROMS)</scope>
    <scope>FUNCTION</scope>
    <scope>SUBCELLULAR LOCATION</scope>
    <scope>SUBUNIT</scope>
    <scope>IDENTIFICATION BY MASS SPECTROMETRY</scope>
</reference>
<name>LSM3_HUMAN</name>
<dbReference type="EMBL" id="AJ238095">
    <property type="protein sequence ID" value="CAB45866.1"/>
    <property type="molecule type" value="mRNA"/>
</dbReference>
<dbReference type="EMBL" id="AF182289">
    <property type="protein sequence ID" value="AAD56227.1"/>
    <property type="molecule type" value="mRNA"/>
</dbReference>
<dbReference type="EMBL" id="AF182418">
    <property type="protein sequence ID" value="AAG14954.1"/>
    <property type="molecule type" value="mRNA"/>
</dbReference>
<dbReference type="EMBL" id="CR457185">
    <property type="protein sequence ID" value="CAG33466.1"/>
    <property type="molecule type" value="mRNA"/>
</dbReference>
<dbReference type="EMBL" id="CH471055">
    <property type="protein sequence ID" value="EAW64190.1"/>
    <property type="molecule type" value="Genomic_DNA"/>
</dbReference>
<dbReference type="EMBL" id="BC007055">
    <property type="protein sequence ID" value="AAH07055.1"/>
    <property type="molecule type" value="mRNA"/>
</dbReference>
<dbReference type="CCDS" id="CCDS2619.1"/>
<dbReference type="RefSeq" id="NP_055278.1">
    <property type="nucleotide sequence ID" value="NM_014463.3"/>
</dbReference>
<dbReference type="PDB" id="3JCR">
    <property type="method" value="EM"/>
    <property type="resolution" value="7.00 A"/>
    <property type="chains" value="3=1-102"/>
</dbReference>
<dbReference type="PDB" id="5O9Z">
    <property type="method" value="EM"/>
    <property type="resolution" value="4.50 A"/>
    <property type="chains" value="p=1-102"/>
</dbReference>
<dbReference type="PDB" id="6AH0">
    <property type="method" value="EM"/>
    <property type="resolution" value="5.70 A"/>
    <property type="chains" value="r=1-102"/>
</dbReference>
<dbReference type="PDB" id="6AHD">
    <property type="method" value="EM"/>
    <property type="resolution" value="3.80 A"/>
    <property type="chains" value="r=1-102"/>
</dbReference>
<dbReference type="PDB" id="6QW6">
    <property type="method" value="EM"/>
    <property type="resolution" value="2.92 A"/>
    <property type="chains" value="63=1-102"/>
</dbReference>
<dbReference type="PDB" id="6QX9">
    <property type="method" value="EM"/>
    <property type="resolution" value="3.28 A"/>
    <property type="chains" value="63=1-102"/>
</dbReference>
<dbReference type="PDB" id="7ABG">
    <property type="method" value="EM"/>
    <property type="resolution" value="7.80 A"/>
    <property type="chains" value="9=1-102"/>
</dbReference>
<dbReference type="PDB" id="8H6E">
    <property type="method" value="EM"/>
    <property type="resolution" value="3.20 A"/>
    <property type="chains" value="6b=1-102"/>
</dbReference>
<dbReference type="PDB" id="8H6J">
    <property type="method" value="EM"/>
    <property type="resolution" value="3.25 A"/>
    <property type="chains" value="6b=1-102"/>
</dbReference>
<dbReference type="PDB" id="8H6K">
    <property type="method" value="EM"/>
    <property type="resolution" value="2.70 A"/>
    <property type="chains" value="6b=1-102"/>
</dbReference>
<dbReference type="PDB" id="8H6L">
    <property type="method" value="EM"/>
    <property type="resolution" value="2.60 A"/>
    <property type="chains" value="6b=1-102"/>
</dbReference>
<dbReference type="PDB" id="8QO9">
    <property type="method" value="EM"/>
    <property type="resolution" value="5.29 A"/>
    <property type="chains" value="63=1-102"/>
</dbReference>
<dbReference type="PDB" id="8QXD">
    <property type="method" value="EM"/>
    <property type="resolution" value="9.60 A"/>
    <property type="chains" value="63=1-102"/>
</dbReference>
<dbReference type="PDB" id="8QZS">
    <property type="method" value="EM"/>
    <property type="resolution" value="4.10 A"/>
    <property type="chains" value="63=1-102"/>
</dbReference>
<dbReference type="PDB" id="8R08">
    <property type="method" value="EM"/>
    <property type="resolution" value="6.10 A"/>
    <property type="chains" value="63=1-102"/>
</dbReference>
<dbReference type="PDB" id="8R09">
    <property type="method" value="EM"/>
    <property type="resolution" value="4.30 A"/>
    <property type="chains" value="63=1-102"/>
</dbReference>
<dbReference type="PDB" id="8R0A">
    <property type="method" value="EM"/>
    <property type="resolution" value="5.80 A"/>
    <property type="chains" value="63=1-102"/>
</dbReference>
<dbReference type="PDB" id="8R0B">
    <property type="method" value="EM"/>
    <property type="resolution" value="4.40 A"/>
    <property type="chains" value="63=1-102"/>
</dbReference>
<dbReference type="PDB" id="8RM5">
    <property type="method" value="EM"/>
    <property type="resolution" value="6.90 A"/>
    <property type="chains" value="63=1-102"/>
</dbReference>
<dbReference type="PDBsum" id="3JCR"/>
<dbReference type="PDBsum" id="5O9Z"/>
<dbReference type="PDBsum" id="6AH0"/>
<dbReference type="PDBsum" id="6AHD"/>
<dbReference type="PDBsum" id="6QW6"/>
<dbReference type="PDBsum" id="6QX9"/>
<dbReference type="PDBsum" id="7ABG"/>
<dbReference type="PDBsum" id="8H6E"/>
<dbReference type="PDBsum" id="8H6J"/>
<dbReference type="PDBsum" id="8H6K"/>
<dbReference type="PDBsum" id="8H6L"/>
<dbReference type="PDBsum" id="8QO9"/>
<dbReference type="PDBsum" id="8QXD"/>
<dbReference type="PDBsum" id="8QZS"/>
<dbReference type="PDBsum" id="8R08"/>
<dbReference type="PDBsum" id="8R09"/>
<dbReference type="PDBsum" id="8R0A"/>
<dbReference type="PDBsum" id="8R0B"/>
<dbReference type="PDBsum" id="8RM5"/>
<dbReference type="EMDB" id="EMD-11695"/>
<dbReference type="EMDB" id="EMD-18529"/>
<dbReference type="EMDB" id="EMD-18718"/>
<dbReference type="EMDB" id="EMD-18781"/>
<dbReference type="EMDB" id="EMD-18786"/>
<dbReference type="EMDB" id="EMD-18787"/>
<dbReference type="EMDB" id="EMD-18788"/>
<dbReference type="EMDB" id="EMD-18789"/>
<dbReference type="EMDB" id="EMD-19349"/>
<dbReference type="EMDB" id="EMD-34500"/>
<dbReference type="EMDB" id="EMD-34505"/>
<dbReference type="EMDB" id="EMD-34507"/>
<dbReference type="EMDB" id="EMD-34508"/>
<dbReference type="EMDB" id="EMD-3766"/>
<dbReference type="EMDB" id="EMD-4658"/>
<dbReference type="EMDB" id="EMD-4665"/>
<dbReference type="EMDB" id="EMD-9621"/>
<dbReference type="EMDB" id="EMD-9624"/>
<dbReference type="SMR" id="P62310"/>
<dbReference type="BioGRID" id="118105">
    <property type="interactions" value="118"/>
</dbReference>
<dbReference type="ComplexPortal" id="CPX-2391">
    <property type="entry name" value="U4/U6.U5 small nuclear ribonucleoprotein complex"/>
</dbReference>
<dbReference type="CORUM" id="P62310"/>
<dbReference type="DIP" id="DIP-31218N"/>
<dbReference type="FunCoup" id="P62310">
    <property type="interactions" value="1302"/>
</dbReference>
<dbReference type="IntAct" id="P62310">
    <property type="interactions" value="79"/>
</dbReference>
<dbReference type="MINT" id="P62310"/>
<dbReference type="STRING" id="9606.ENSP00000302160"/>
<dbReference type="MoonDB" id="P62310">
    <property type="type" value="Predicted"/>
</dbReference>
<dbReference type="GlyGen" id="P62310">
    <property type="glycosylation" value="1 site, 1 O-linked glycan (1 site)"/>
</dbReference>
<dbReference type="iPTMnet" id="P62310"/>
<dbReference type="PhosphoSitePlus" id="P62310"/>
<dbReference type="BioMuta" id="LSM3"/>
<dbReference type="DMDM" id="61227725"/>
<dbReference type="jPOST" id="P62310"/>
<dbReference type="MassIVE" id="P62310"/>
<dbReference type="PaxDb" id="9606-ENSP00000302160"/>
<dbReference type="PeptideAtlas" id="P62310"/>
<dbReference type="ProteomicsDB" id="57389"/>
<dbReference type="Pumba" id="P62310"/>
<dbReference type="TopDownProteomics" id="P62310"/>
<dbReference type="Antibodypedia" id="26522">
    <property type="antibodies" value="96 antibodies from 21 providers"/>
</dbReference>
<dbReference type="DNASU" id="27258"/>
<dbReference type="Ensembl" id="ENST00000306024.4">
    <property type="protein sequence ID" value="ENSP00000302160.3"/>
    <property type="gene ID" value="ENSG00000170860.4"/>
</dbReference>
<dbReference type="GeneID" id="27258"/>
<dbReference type="KEGG" id="hsa:27258"/>
<dbReference type="MANE-Select" id="ENST00000306024.4">
    <property type="protein sequence ID" value="ENSP00000302160.3"/>
    <property type="RefSeq nucleotide sequence ID" value="NM_014463.3"/>
    <property type="RefSeq protein sequence ID" value="NP_055278.1"/>
</dbReference>
<dbReference type="UCSC" id="uc003byo.2">
    <property type="organism name" value="human"/>
</dbReference>
<dbReference type="AGR" id="HGNC:17874"/>
<dbReference type="CTD" id="27258"/>
<dbReference type="DisGeNET" id="27258"/>
<dbReference type="GeneCards" id="LSM3"/>
<dbReference type="HGNC" id="HGNC:17874">
    <property type="gene designation" value="LSM3"/>
</dbReference>
<dbReference type="HPA" id="ENSG00000170860">
    <property type="expression patterns" value="Low tissue specificity"/>
</dbReference>
<dbReference type="MIM" id="607283">
    <property type="type" value="gene"/>
</dbReference>
<dbReference type="neXtProt" id="NX_P62310"/>
<dbReference type="OpenTargets" id="ENSG00000170860"/>
<dbReference type="PharmGKB" id="PA134881991"/>
<dbReference type="VEuPathDB" id="HostDB:ENSG00000170860"/>
<dbReference type="eggNOG" id="KOG3460">
    <property type="taxonomic scope" value="Eukaryota"/>
</dbReference>
<dbReference type="GeneTree" id="ENSGT00390000013951"/>
<dbReference type="HOGENOM" id="CLU_076902_5_1_1"/>
<dbReference type="InParanoid" id="P62310"/>
<dbReference type="OMA" id="FDSHCNI"/>
<dbReference type="OrthoDB" id="29543at2759"/>
<dbReference type="PAN-GO" id="P62310">
    <property type="GO annotations" value="9 GO annotations based on evolutionary models"/>
</dbReference>
<dbReference type="PhylomeDB" id="P62310"/>
<dbReference type="TreeFam" id="TF312907"/>
<dbReference type="PathwayCommons" id="P62310"/>
<dbReference type="Reactome" id="R-HSA-430039">
    <property type="pathway name" value="mRNA decay by 5' to 3' exoribonuclease"/>
</dbReference>
<dbReference type="Reactome" id="R-HSA-72163">
    <property type="pathway name" value="mRNA Splicing - Major Pathway"/>
</dbReference>
<dbReference type="SignaLink" id="P62310"/>
<dbReference type="SIGNOR" id="P62310"/>
<dbReference type="BioGRID-ORCS" id="27258">
    <property type="hits" value="782 hits in 1124 CRISPR screens"/>
</dbReference>
<dbReference type="CD-CODE" id="232F8A39">
    <property type="entry name" value="P-body"/>
</dbReference>
<dbReference type="CD-CODE" id="DEE660B4">
    <property type="entry name" value="Stress granule"/>
</dbReference>
<dbReference type="ChiTaRS" id="LSM3">
    <property type="organism name" value="human"/>
</dbReference>
<dbReference type="GeneWiki" id="LSM3"/>
<dbReference type="GenomeRNAi" id="27258"/>
<dbReference type="Pharos" id="P62310">
    <property type="development level" value="Tbio"/>
</dbReference>
<dbReference type="PRO" id="PR:P62310"/>
<dbReference type="Proteomes" id="UP000005640">
    <property type="component" value="Chromosome 3"/>
</dbReference>
<dbReference type="RNAct" id="P62310">
    <property type="molecule type" value="protein"/>
</dbReference>
<dbReference type="Bgee" id="ENSG00000170860">
    <property type="expression patterns" value="Expressed in biceps brachii and 221 other cell types or tissues"/>
</dbReference>
<dbReference type="GO" id="GO:0071013">
    <property type="term" value="C:catalytic step 2 spliceosome"/>
    <property type="evidence" value="ECO:0000314"/>
    <property type="project" value="UniProtKB"/>
</dbReference>
<dbReference type="GO" id="GO:0005829">
    <property type="term" value="C:cytosol"/>
    <property type="evidence" value="ECO:0000304"/>
    <property type="project" value="Reactome"/>
</dbReference>
<dbReference type="GO" id="GO:1990726">
    <property type="term" value="C:Lsm1-7-Pat1 complex"/>
    <property type="evidence" value="ECO:0000318"/>
    <property type="project" value="GO_Central"/>
</dbReference>
<dbReference type="GO" id="GO:0120115">
    <property type="term" value="C:Lsm2-8 complex"/>
    <property type="evidence" value="ECO:0000314"/>
    <property type="project" value="UniProtKB"/>
</dbReference>
<dbReference type="GO" id="GO:0005654">
    <property type="term" value="C:nucleoplasm"/>
    <property type="evidence" value="ECO:0000304"/>
    <property type="project" value="Reactome"/>
</dbReference>
<dbReference type="GO" id="GO:0005634">
    <property type="term" value="C:nucleus"/>
    <property type="evidence" value="ECO:0000314"/>
    <property type="project" value="UniProtKB"/>
</dbReference>
<dbReference type="GO" id="GO:0000932">
    <property type="term" value="C:P-body"/>
    <property type="evidence" value="ECO:0000318"/>
    <property type="project" value="GO_Central"/>
</dbReference>
<dbReference type="GO" id="GO:0071011">
    <property type="term" value="C:precatalytic spliceosome"/>
    <property type="evidence" value="ECO:0000318"/>
    <property type="project" value="GO_Central"/>
</dbReference>
<dbReference type="GO" id="GO:0071005">
    <property type="term" value="C:U2-type precatalytic spliceosome"/>
    <property type="evidence" value="ECO:0000314"/>
    <property type="project" value="UniProtKB"/>
</dbReference>
<dbReference type="GO" id="GO:0046540">
    <property type="term" value="C:U4/U6 x U5 tri-snRNP complex"/>
    <property type="evidence" value="ECO:0000314"/>
    <property type="project" value="UniProtKB"/>
</dbReference>
<dbReference type="GO" id="GO:0005688">
    <property type="term" value="C:U6 snRNP"/>
    <property type="evidence" value="ECO:0000318"/>
    <property type="project" value="GO_Central"/>
</dbReference>
<dbReference type="GO" id="GO:0003723">
    <property type="term" value="F:RNA binding"/>
    <property type="evidence" value="ECO:0007005"/>
    <property type="project" value="UniProtKB"/>
</dbReference>
<dbReference type="GO" id="GO:0030629">
    <property type="term" value="F:U6 snRNA 3'-end binding"/>
    <property type="evidence" value="ECO:0000314"/>
    <property type="project" value="MGI"/>
</dbReference>
<dbReference type="GO" id="GO:0006397">
    <property type="term" value="P:mRNA processing"/>
    <property type="evidence" value="ECO:0000304"/>
    <property type="project" value="UniProtKB"/>
</dbReference>
<dbReference type="GO" id="GO:0000398">
    <property type="term" value="P:mRNA splicing, via spliceosome"/>
    <property type="evidence" value="ECO:0000314"/>
    <property type="project" value="UniProtKB"/>
</dbReference>
<dbReference type="GO" id="GO:0033962">
    <property type="term" value="P:P-body assembly"/>
    <property type="evidence" value="ECO:0000318"/>
    <property type="project" value="GO_Central"/>
</dbReference>
<dbReference type="CDD" id="cd01730">
    <property type="entry name" value="LSm3"/>
    <property type="match status" value="1"/>
</dbReference>
<dbReference type="FunFam" id="2.30.30.100:FF:000007">
    <property type="entry name" value="U6 snRNA-associated Sm-like protein LSm3"/>
    <property type="match status" value="1"/>
</dbReference>
<dbReference type="Gene3D" id="2.30.30.100">
    <property type="match status" value="1"/>
</dbReference>
<dbReference type="InterPro" id="IPR034105">
    <property type="entry name" value="Lsm3"/>
</dbReference>
<dbReference type="InterPro" id="IPR010920">
    <property type="entry name" value="LSM_dom_sf"/>
</dbReference>
<dbReference type="InterPro" id="IPR047575">
    <property type="entry name" value="Sm"/>
</dbReference>
<dbReference type="InterPro" id="IPR040002">
    <property type="entry name" value="Sm-like_LSM3"/>
</dbReference>
<dbReference type="InterPro" id="IPR001163">
    <property type="entry name" value="Sm_dom_euk/arc"/>
</dbReference>
<dbReference type="PANTHER" id="PTHR13110">
    <property type="entry name" value="U6 SNRNA-ASSOCIATED SM-LIKE PROTEIN LSM3"/>
    <property type="match status" value="1"/>
</dbReference>
<dbReference type="Pfam" id="PF01423">
    <property type="entry name" value="LSM"/>
    <property type="match status" value="1"/>
</dbReference>
<dbReference type="SMART" id="SM00651">
    <property type="entry name" value="Sm"/>
    <property type="match status" value="1"/>
</dbReference>
<dbReference type="SUPFAM" id="SSF50182">
    <property type="entry name" value="Sm-like ribonucleoproteins"/>
    <property type="match status" value="1"/>
</dbReference>
<dbReference type="PROSITE" id="PS52002">
    <property type="entry name" value="SM"/>
    <property type="match status" value="1"/>
</dbReference>
<proteinExistence type="evidence at protein level"/>
<protein>
    <recommendedName>
        <fullName>U6 snRNA-associated Sm-like protein LSm3</fullName>
    </recommendedName>
</protein>
<evidence type="ECO:0000255" key="1">
    <source>
        <dbReference type="PROSITE-ProRule" id="PRU01346"/>
    </source>
</evidence>
<evidence type="ECO:0000269" key="2">
    <source>
    </source>
</evidence>
<evidence type="ECO:0000269" key="3">
    <source>
    </source>
</evidence>
<evidence type="ECO:0000269" key="4">
    <source>
    </source>
</evidence>
<evidence type="ECO:0000269" key="5">
    <source>
    </source>
</evidence>
<evidence type="ECO:0000305" key="6"/>
<evidence type="ECO:0007744" key="7">
    <source>
        <dbReference type="PDB" id="3JCR"/>
    </source>
</evidence>
<evidence type="ECO:0007744" key="8">
    <source>
        <dbReference type="PDB" id="5O9Z"/>
    </source>
</evidence>
<evidence type="ECO:0007744" key="9">
    <source>
    </source>
</evidence>
<evidence type="ECO:0007744" key="10">
    <source>
    </source>
</evidence>